<proteinExistence type="evidence at protein level"/>
<reference key="1">
    <citation type="journal article" date="2001" name="Biochem. J.">
        <title>Cloning and rational mutagenesis of kexstatin I, a potent proteinaceous inhibitor of Kex2 proteinase.</title>
        <authorList>
            <person name="Oda K."/>
            <person name="Oyama H."/>
            <person name="Ito S."/>
            <person name="Fukiharu M."/>
            <person name="Miyagawa Y."/>
            <person name="Takahashi S."/>
            <person name="Hirose M."/>
            <person name="Kikuchi N."/>
            <person name="Nakayama T."/>
            <person name="Shibano Y."/>
        </authorList>
    </citation>
    <scope>NUCLEOTIDE SEQUENCE [GENOMIC DNA]</scope>
    <scope>CHARACTERIZATION</scope>
    <scope>MUTAGENESIS OF THR-104 AND LYS-105</scope>
    <source>
        <strain>Q268</strain>
    </source>
</reference>
<reference key="2">
    <citation type="journal article" date="1996" name="Biosci. Biotechnol. Biochem.">
        <title>A novel proteinaceous Kex 2 proteinase inhibitor, kexstatin, from Streptomyces platensis Q268.</title>
        <authorList>
            <person name="Oda K."/>
            <person name="Takahashi S."/>
            <person name="Kikuchi N."/>
            <person name="Shibano Y."/>
        </authorList>
    </citation>
    <scope>PARTIAL PROTEIN SEQUENCE</scope>
    <scope>CHARACTERIZATION</scope>
    <source>
        <strain>Q268</strain>
    </source>
</reference>
<comment type="function">
    <text>Strongly inhibits the kexin (KEX2) protease. Also active on subtilisin but not thermolysin, trypsin, or chymotrypsin.</text>
</comment>
<comment type="subunit">
    <text>Homodimer.</text>
</comment>
<comment type="subcellular location">
    <subcellularLocation>
        <location>Secreted</location>
    </subcellularLocation>
</comment>
<comment type="similarity">
    <text evidence="3">Belongs to the protease inhibitor I16 (SSI) family.</text>
</comment>
<protein>
    <recommendedName>
        <fullName>Kexstatin-1</fullName>
    </recommendedName>
    <alternativeName>
        <fullName>Kexstatin I</fullName>
    </alternativeName>
</protein>
<feature type="signal peptide" evidence="2">
    <location>
        <begin position="1"/>
        <end position="25"/>
    </location>
</feature>
<feature type="propeptide" id="PRO_0000033276">
    <location>
        <begin position="26"/>
        <end position="35"/>
    </location>
</feature>
<feature type="chain" id="PRO_0000033277" description="Kexstatin-1">
    <location>
        <begin position="36"/>
        <end position="145"/>
    </location>
</feature>
<feature type="site" description="Reactive bond">
    <location>
        <begin position="105"/>
        <end position="106"/>
    </location>
</feature>
<feature type="disulfide bond" evidence="1">
    <location>
        <begin position="66"/>
        <end position="81"/>
    </location>
</feature>
<feature type="disulfide bond" evidence="1">
    <location>
        <begin position="103"/>
        <end position="133"/>
    </location>
</feature>
<keyword id="KW-0903">Direct protein sequencing</keyword>
<keyword id="KW-1015">Disulfide bond</keyword>
<keyword id="KW-0646">Protease inhibitor</keyword>
<keyword id="KW-0964">Secreted</keyword>
<keyword id="KW-0722">Serine protease inhibitor</keyword>
<keyword id="KW-0732">Signal</keyword>
<organism>
    <name type="scientific">Streptomyces platensis</name>
    <dbReference type="NCBI Taxonomy" id="58346"/>
    <lineage>
        <taxon>Bacteria</taxon>
        <taxon>Bacillati</taxon>
        <taxon>Actinomycetota</taxon>
        <taxon>Actinomycetes</taxon>
        <taxon>Kitasatosporales</taxon>
        <taxon>Streptomycetaceae</taxon>
        <taxon>Streptomyces</taxon>
    </lineage>
</organism>
<evidence type="ECO:0000250" key="1"/>
<evidence type="ECO:0000255" key="2"/>
<evidence type="ECO:0000305" key="3"/>
<sequence>MRYITGAVALGAALVLGTLATTAQAAAPAQPARTGGLYAPTELVLTVGQGESRATATVQRAVTLSCMPGARGSHPNPLGACTQLRAVAGDFNAITAATSDRLCTKEWNPLVVTADGVWQGKRVSYSYTFANRCEMNIDSDTVFNF</sequence>
<dbReference type="EMBL" id="AB005264">
    <property type="protein sequence ID" value="BAA21112.1"/>
    <property type="molecule type" value="Genomic_DNA"/>
</dbReference>
<dbReference type="SMR" id="O33702"/>
<dbReference type="STRING" id="58346.BG653_02382"/>
<dbReference type="MEROPS" id="I16.002"/>
<dbReference type="GO" id="GO:0005576">
    <property type="term" value="C:extracellular region"/>
    <property type="evidence" value="ECO:0007669"/>
    <property type="project" value="UniProtKB-SubCell"/>
</dbReference>
<dbReference type="GO" id="GO:0004867">
    <property type="term" value="F:serine-type endopeptidase inhibitor activity"/>
    <property type="evidence" value="ECO:0007669"/>
    <property type="project" value="UniProtKB-UniRule"/>
</dbReference>
<dbReference type="Gene3D" id="3.30.350.10">
    <property type="entry name" value="Subtilisin inhibitor-like"/>
    <property type="match status" value="1"/>
</dbReference>
<dbReference type="HAMAP" id="MF_00778">
    <property type="entry name" value="SSI"/>
    <property type="match status" value="1"/>
</dbReference>
<dbReference type="InterPro" id="IPR000691">
    <property type="entry name" value="Prot_inh_I16_SSI"/>
</dbReference>
<dbReference type="InterPro" id="IPR020054">
    <property type="entry name" value="Prot_inh_SSI_I16_CS"/>
</dbReference>
<dbReference type="InterPro" id="IPR023549">
    <property type="entry name" value="Subtilisin_inhibitor"/>
</dbReference>
<dbReference type="InterPro" id="IPR036819">
    <property type="entry name" value="Subtilisin_inhibitor-like_sf"/>
</dbReference>
<dbReference type="Pfam" id="PF00720">
    <property type="entry name" value="SSI"/>
    <property type="match status" value="1"/>
</dbReference>
<dbReference type="PRINTS" id="PR00294">
    <property type="entry name" value="SSBTLNINHBTR"/>
</dbReference>
<dbReference type="SUPFAM" id="SSF55399">
    <property type="entry name" value="Subtilisin inhibitor"/>
    <property type="match status" value="1"/>
</dbReference>
<dbReference type="PROSITE" id="PS00999">
    <property type="entry name" value="SSI"/>
    <property type="match status" value="1"/>
</dbReference>
<name>SSIK_STRPT</name>
<accession>O33702</accession>